<organism>
    <name type="scientific">Mycobacterium tuberculosis (strain ATCC 25618 / H37Rv)</name>
    <dbReference type="NCBI Taxonomy" id="83332"/>
    <lineage>
        <taxon>Bacteria</taxon>
        <taxon>Bacillati</taxon>
        <taxon>Actinomycetota</taxon>
        <taxon>Actinomycetes</taxon>
        <taxon>Mycobacteriales</taxon>
        <taxon>Mycobacteriaceae</taxon>
        <taxon>Mycobacterium</taxon>
        <taxon>Mycobacterium tuberculosis complex</taxon>
    </lineage>
</organism>
<keyword id="KW-0012">Acyltransferase</keyword>
<keyword id="KW-0319">Glycerol metabolism</keyword>
<keyword id="KW-0444">Lipid biosynthesis</keyword>
<keyword id="KW-0443">Lipid metabolism</keyword>
<keyword id="KW-1185">Reference proteome</keyword>
<keyword id="KW-0808">Transferase</keyword>
<accession>P9WKB1</accession>
<accession>L0TBI7</accession>
<accession>O53304</accession>
<sequence>MRRLNGVDALMLYLDGGSAYNHTLKISVLDPSTDPDGWSWPKARQMFEERAHLLPVFRLRYLPTPLGLHHPIWVEDPEFDLDAHVRRVVCPAPGGMAEFCALVEQIYAHPLDRDRPLWQTWVVEGLDGGRVALVTLLHHAYSDGVGVLDMLAAFYNDTPDEAPVVAPPWEPPPLPSTRQRLGWALRDLPSRLGKIAPTVRAVRDRVRIEREFAKDGDRRVPPTFDRSAPPGPFQRGLSRSRRFSCESFPLAEVREVSKTLGVTINDVFLACVAGAVRRYLERCGSPPTDAMVATMPLAVTPAAERAHPGNYSSVDYVWLRADIADPLERLHATHLAAEATKQHFAQTKDADVGAVVELLPERLISGLARANARTKGRFDTFKNVVVSNVPGPREPRYLGRWRVDQWFSTGQISHGATLNMTVWSYCDQFNLCVMADAVAVRNTWELLGGFRASHEELLAAARAQATPKEMAT</sequence>
<dbReference type="EC" id="2.3.1.20" evidence="4"/>
<dbReference type="EMBL" id="AL123456">
    <property type="protein sequence ID" value="CCP45896.1"/>
    <property type="molecule type" value="Genomic_DNA"/>
</dbReference>
<dbReference type="PIR" id="C70853">
    <property type="entry name" value="C70853"/>
</dbReference>
<dbReference type="RefSeq" id="NP_217603.1">
    <property type="nucleotide sequence ID" value="NC_000962.3"/>
</dbReference>
<dbReference type="RefSeq" id="WP_003906978.1">
    <property type="nucleotide sequence ID" value="NZ_NVQJ01000011.1"/>
</dbReference>
<dbReference type="SMR" id="P9WKB1"/>
<dbReference type="STRING" id="83332.Rv3087"/>
<dbReference type="SwissLipids" id="SLP:000001176"/>
<dbReference type="PaxDb" id="83332-Rv3087"/>
<dbReference type="DNASU" id="888653"/>
<dbReference type="GeneID" id="888653"/>
<dbReference type="KEGG" id="mtu:Rv3087"/>
<dbReference type="KEGG" id="mtv:RVBD_3087"/>
<dbReference type="TubercuList" id="Rv3087"/>
<dbReference type="eggNOG" id="COG1020">
    <property type="taxonomic scope" value="Bacteria"/>
</dbReference>
<dbReference type="InParanoid" id="P9WKB1"/>
<dbReference type="OrthoDB" id="4671961at2"/>
<dbReference type="PhylomeDB" id="P9WKB1"/>
<dbReference type="UniPathway" id="UPA00282"/>
<dbReference type="Proteomes" id="UP000001584">
    <property type="component" value="Chromosome"/>
</dbReference>
<dbReference type="GO" id="GO:0005886">
    <property type="term" value="C:plasma membrane"/>
    <property type="evidence" value="ECO:0000318"/>
    <property type="project" value="GO_Central"/>
</dbReference>
<dbReference type="GO" id="GO:0004144">
    <property type="term" value="F:diacylglycerol O-acyltransferase activity"/>
    <property type="evidence" value="ECO:0007669"/>
    <property type="project" value="UniProtKB-EC"/>
</dbReference>
<dbReference type="GO" id="GO:0008374">
    <property type="term" value="F:O-acyltransferase activity"/>
    <property type="evidence" value="ECO:0000318"/>
    <property type="project" value="GO_Central"/>
</dbReference>
<dbReference type="GO" id="GO:0051701">
    <property type="term" value="P:biological process involved in interaction with host"/>
    <property type="evidence" value="ECO:0000315"/>
    <property type="project" value="MTBBASE"/>
</dbReference>
<dbReference type="GO" id="GO:0006071">
    <property type="term" value="P:glycerol metabolic process"/>
    <property type="evidence" value="ECO:0007669"/>
    <property type="project" value="UniProtKB-KW"/>
</dbReference>
<dbReference type="GO" id="GO:0010447">
    <property type="term" value="P:response to acidic pH"/>
    <property type="evidence" value="ECO:0000270"/>
    <property type="project" value="MTBBASE"/>
</dbReference>
<dbReference type="GO" id="GO:0001666">
    <property type="term" value="P:response to hypoxia"/>
    <property type="evidence" value="ECO:0000318"/>
    <property type="project" value="GO_Central"/>
</dbReference>
<dbReference type="GO" id="GO:0071731">
    <property type="term" value="P:response to nitric oxide"/>
    <property type="evidence" value="ECO:0000318"/>
    <property type="project" value="GO_Central"/>
</dbReference>
<dbReference type="GO" id="GO:0052167">
    <property type="term" value="P:symbiont-mediated perturbation of host innate immune response"/>
    <property type="evidence" value="ECO:0000314"/>
    <property type="project" value="MTBBASE"/>
</dbReference>
<dbReference type="GO" id="GO:0019432">
    <property type="term" value="P:triglyceride biosynthetic process"/>
    <property type="evidence" value="ECO:0000318"/>
    <property type="project" value="GO_Central"/>
</dbReference>
<dbReference type="Gene3D" id="3.30.559.10">
    <property type="entry name" value="Chloramphenicol acetyltransferase-like domain"/>
    <property type="match status" value="1"/>
</dbReference>
<dbReference type="InterPro" id="IPR014292">
    <property type="entry name" value="Acyl_transf_WS/DGAT"/>
</dbReference>
<dbReference type="InterPro" id="IPR023213">
    <property type="entry name" value="CAT-like_dom_sf"/>
</dbReference>
<dbReference type="InterPro" id="IPR045034">
    <property type="entry name" value="O-acyltransferase_WSD1-like"/>
</dbReference>
<dbReference type="InterPro" id="IPR009721">
    <property type="entry name" value="O-acyltransferase_WSD1_C"/>
</dbReference>
<dbReference type="InterPro" id="IPR004255">
    <property type="entry name" value="O-acyltransferase_WSD1_N"/>
</dbReference>
<dbReference type="NCBIfam" id="TIGR02946">
    <property type="entry name" value="acyl_WS_DGAT"/>
    <property type="match status" value="1"/>
</dbReference>
<dbReference type="PANTHER" id="PTHR31650">
    <property type="entry name" value="O-ACYLTRANSFERASE (WSD1-LIKE) FAMILY PROTEIN"/>
    <property type="match status" value="1"/>
</dbReference>
<dbReference type="PANTHER" id="PTHR31650:SF1">
    <property type="entry name" value="WAX ESTER SYNTHASE_DIACYLGLYCEROL ACYLTRANSFERASE 4-RELATED"/>
    <property type="match status" value="1"/>
</dbReference>
<dbReference type="Pfam" id="PF06974">
    <property type="entry name" value="WS_DGAT_C"/>
    <property type="match status" value="1"/>
</dbReference>
<dbReference type="Pfam" id="PF03007">
    <property type="entry name" value="WS_DGAT_cat"/>
    <property type="match status" value="1"/>
</dbReference>
<dbReference type="SUPFAM" id="SSF52777">
    <property type="entry name" value="CoA-dependent acyltransferases"/>
    <property type="match status" value="1"/>
</dbReference>
<reference key="1">
    <citation type="journal article" date="1998" name="Nature">
        <title>Deciphering the biology of Mycobacterium tuberculosis from the complete genome sequence.</title>
        <authorList>
            <person name="Cole S.T."/>
            <person name="Brosch R."/>
            <person name="Parkhill J."/>
            <person name="Garnier T."/>
            <person name="Churcher C.M."/>
            <person name="Harris D.E."/>
            <person name="Gordon S.V."/>
            <person name="Eiglmeier K."/>
            <person name="Gas S."/>
            <person name="Barry C.E. III"/>
            <person name="Tekaia F."/>
            <person name="Badcock K."/>
            <person name="Basham D."/>
            <person name="Brown D."/>
            <person name="Chillingworth T."/>
            <person name="Connor R."/>
            <person name="Davies R.M."/>
            <person name="Devlin K."/>
            <person name="Feltwell T."/>
            <person name="Gentles S."/>
            <person name="Hamlin N."/>
            <person name="Holroyd S."/>
            <person name="Hornsby T."/>
            <person name="Jagels K."/>
            <person name="Krogh A."/>
            <person name="McLean J."/>
            <person name="Moule S."/>
            <person name="Murphy L.D."/>
            <person name="Oliver S."/>
            <person name="Osborne J."/>
            <person name="Quail M.A."/>
            <person name="Rajandream M.A."/>
            <person name="Rogers J."/>
            <person name="Rutter S."/>
            <person name="Seeger K."/>
            <person name="Skelton S."/>
            <person name="Squares S."/>
            <person name="Squares R."/>
            <person name="Sulston J.E."/>
            <person name="Taylor K."/>
            <person name="Whitehead S."/>
            <person name="Barrell B.G."/>
        </authorList>
    </citation>
    <scope>NUCLEOTIDE SEQUENCE [LARGE SCALE GENOMIC DNA]</scope>
    <source>
        <strain>ATCC 25618 / H37Rv</strain>
    </source>
</reference>
<reference key="2">
    <citation type="journal article" date="2003" name="FEMS Microbiol. Lett.">
        <title>mymA operon of Mycobacterium tuberculosis: its regulation and importance in the cell envelope.</title>
        <authorList>
            <person name="Singh A."/>
            <person name="Jain S."/>
            <person name="Gupta S."/>
            <person name="Das T."/>
            <person name="Tyagi A.K."/>
        </authorList>
    </citation>
    <scope>INDUCTION</scope>
</reference>
<reference key="3">
    <citation type="journal article" date="2004" name="J. Bacteriol.">
        <title>Induction of a novel class of diacylglycerol acyltransferases and triacylglycerol accumulation in Mycobacterium tuberculosis as it goes into a dormancy-like state in culture.</title>
        <authorList>
            <person name="Daniel J."/>
            <person name="Deb C."/>
            <person name="Dubey V.S."/>
            <person name="Sirakova T.D."/>
            <person name="Abomoelak B."/>
            <person name="Morbidoni H.R."/>
            <person name="Kolattukudy P.E."/>
        </authorList>
    </citation>
    <scope>FUNCTION IN E.COLI</scope>
    <scope>CATALYTIC ACTIVITY</scope>
    <scope>INDUCTION BY NITRIC OXIDE</scope>
    <source>
        <strain>ATCC 25618 / H37Rv</strain>
    </source>
</reference>
<reference key="4">
    <citation type="journal article" date="2005" name="J. Bacteriol.">
        <title>Requirement of the mymA operon for appropriate cell wall ultrastructure and persistence of Mycobacterium tuberculosis in the spleens of guinea pigs.</title>
        <authorList>
            <person name="Singh A."/>
            <person name="Gupta R."/>
            <person name="Vishwakarma R.A."/>
            <person name="Narayanan P.R."/>
            <person name="Paramasivan C.N."/>
            <person name="Ramanathan V.D."/>
            <person name="Tyagi A.K."/>
        </authorList>
    </citation>
    <scope>FUNCTION</scope>
    <scope>DISRUPTION PHENOTYPE</scope>
    <source>
        <strain>Erdman</strain>
    </source>
</reference>
<reference key="5">
    <citation type="journal article" date="2007" name="Tuberculosis">
        <title>The acid-induced operon Rv3083-Rv3089 is required for growth of Mycobacterium tuberculosis in macrophages.</title>
        <authorList>
            <person name="Cheruvu M."/>
            <person name="Plikaytis B.B."/>
            <person name="Shinnick T.M."/>
        </authorList>
    </citation>
    <scope>DISRUPTION PHENOTYPE</scope>
    <source>
        <strain>ATCC 25618 / H37Rv</strain>
    </source>
</reference>
<reference key="6">
    <citation type="journal article" date="2011" name="Mol. Cell. Proteomics">
        <title>Proteogenomic analysis of Mycobacterium tuberculosis by high resolution mass spectrometry.</title>
        <authorList>
            <person name="Kelkar D.S."/>
            <person name="Kumar D."/>
            <person name="Kumar P."/>
            <person name="Balakrishnan L."/>
            <person name="Muthusamy B."/>
            <person name="Yadav A.K."/>
            <person name="Shrivastava P."/>
            <person name="Marimuthu A."/>
            <person name="Anand S."/>
            <person name="Sundaram H."/>
            <person name="Kingsbury R."/>
            <person name="Harsha H.C."/>
            <person name="Nair B."/>
            <person name="Prasad T.S."/>
            <person name="Chauhan D.S."/>
            <person name="Katoch K."/>
            <person name="Katoch V.M."/>
            <person name="Kumar P."/>
            <person name="Chaerkady R."/>
            <person name="Ramachandran S."/>
            <person name="Dash D."/>
            <person name="Pandey A."/>
        </authorList>
    </citation>
    <scope>IDENTIFICATION BY MASS SPECTROMETRY [LARGE SCALE ANALYSIS]</scope>
    <source>
        <strain>ATCC 25618 / H37Rv</strain>
    </source>
</reference>
<gene>
    <name type="ordered locus">Rv3087</name>
    <name type="ORF">MTV013.08</name>
</gene>
<name>Y3087_MYCTU</name>
<protein>
    <recommendedName>
        <fullName>Putative diacyglycerol O-acyltransferase Rv3087</fullName>
        <ecNumber evidence="4">2.3.1.20</ecNumber>
    </recommendedName>
    <alternativeName>
        <fullName>Putative triacylglycerol synthase Rv3087</fullName>
    </alternativeName>
</protein>
<comment type="function">
    <text evidence="4 5">Required for maintaining the appropriate mycolic acid composition and permeability of the envelope on its exposure to acidic pH. Upon expression in E.coli functions weakly as a triacylglycerol synthase, making triacylglycerol (TG) from diolein and long-chain fatty acyl-CoA. Has no wax synthase activity.</text>
</comment>
<comment type="catalytic activity">
    <reaction evidence="4">
        <text>an acyl-CoA + a 1,2-diacyl-sn-glycerol = a triacyl-sn-glycerol + CoA</text>
        <dbReference type="Rhea" id="RHEA:10868"/>
        <dbReference type="ChEBI" id="CHEBI:17815"/>
        <dbReference type="ChEBI" id="CHEBI:57287"/>
        <dbReference type="ChEBI" id="CHEBI:58342"/>
        <dbReference type="ChEBI" id="CHEBI:64615"/>
        <dbReference type="EC" id="2.3.1.20"/>
    </reaction>
</comment>
<comment type="catalytic activity">
    <reaction evidence="4">
        <text>di-(9Z)-octadecenoylglycerol + (9Z)-octadecenoyl-CoA = 1,2,3-tri-(9Z-octadecenoyl)-glycerol + CoA</text>
        <dbReference type="Rhea" id="RHEA:45780"/>
        <dbReference type="ChEBI" id="CHEBI:53753"/>
        <dbReference type="ChEBI" id="CHEBI:57287"/>
        <dbReference type="ChEBI" id="CHEBI:57387"/>
        <dbReference type="ChEBI" id="CHEBI:75945"/>
    </reaction>
    <physiologicalReaction direction="left-to-right" evidence="4">
        <dbReference type="Rhea" id="RHEA:45781"/>
    </physiologicalReaction>
</comment>
<comment type="pathway">
    <text>Glycerolipid metabolism; triacylglycerol biosynthesis.</text>
</comment>
<comment type="induction">
    <text evidence="3 4">Expression is controlled by VirS. Induced at acidic pH and in macrophages, and in response to low levels of nitric oxide (NO).</text>
</comment>
<comment type="disruption phenotype">
    <text evidence="5 6">Inactivation of the mymA operon causes altered cell wall structure, reduced contents and altered composition of mycolic acids along with the accumulation of saturated C24 and C26 fatty acids, and enhanced susceptibility to antibiotics, detergents and acidic pH. Also impairs ability to survive in macrophages.</text>
</comment>
<comment type="similarity">
    <text evidence="7">Belongs to the long-chain O-acyltransferase family.</text>
</comment>
<feature type="chain" id="PRO_0000222913" description="Putative diacyglycerol O-acyltransferase Rv3087">
    <location>
        <begin position="1"/>
        <end position="472"/>
    </location>
</feature>
<feature type="region of interest" description="Disordered" evidence="2">
    <location>
        <begin position="217"/>
        <end position="238"/>
    </location>
</feature>
<feature type="active site" description="Proton acceptor" evidence="1">
    <location>
        <position position="139"/>
    </location>
</feature>
<proteinExistence type="evidence at protein level"/>
<evidence type="ECO:0000255" key="1"/>
<evidence type="ECO:0000256" key="2">
    <source>
        <dbReference type="SAM" id="MobiDB-lite"/>
    </source>
</evidence>
<evidence type="ECO:0000269" key="3">
    <source>
    </source>
</evidence>
<evidence type="ECO:0000269" key="4">
    <source>
    </source>
</evidence>
<evidence type="ECO:0000269" key="5">
    <source>
    </source>
</evidence>
<evidence type="ECO:0000269" key="6">
    <source>
    </source>
</evidence>
<evidence type="ECO:0000305" key="7"/>